<feature type="chain" id="PRO_0000023025" description="Aspartate 1-decarboxylase beta chain" evidence="1">
    <location>
        <begin position="1"/>
        <end position="24"/>
    </location>
</feature>
<feature type="chain" id="PRO_0000023026" description="Aspartate 1-decarboxylase alpha chain" evidence="1">
    <location>
        <begin position="25"/>
        <end position="117"/>
    </location>
</feature>
<feature type="active site" description="Schiff-base intermediate with substrate; via pyruvic acid" evidence="1">
    <location>
        <position position="25"/>
    </location>
</feature>
<feature type="active site" description="Proton donor" evidence="1">
    <location>
        <position position="58"/>
    </location>
</feature>
<feature type="binding site" evidence="1">
    <location>
        <position position="57"/>
    </location>
    <ligand>
        <name>substrate</name>
    </ligand>
</feature>
<feature type="binding site" evidence="1">
    <location>
        <begin position="73"/>
        <end position="75"/>
    </location>
    <ligand>
        <name>substrate</name>
    </ligand>
</feature>
<feature type="modified residue" description="Pyruvic acid (Ser)" evidence="1">
    <location>
        <position position="25"/>
    </location>
</feature>
<gene>
    <name evidence="1" type="primary">panD</name>
    <name type="ordered locus">BF1004</name>
</gene>
<dbReference type="EC" id="4.1.1.11" evidence="1"/>
<dbReference type="EMBL" id="AP006841">
    <property type="protein sequence ID" value="BAD47754.1"/>
    <property type="molecule type" value="Genomic_DNA"/>
</dbReference>
<dbReference type="RefSeq" id="WP_005785327.1">
    <property type="nucleotide sequence ID" value="NZ_UYXF01000020.1"/>
</dbReference>
<dbReference type="RefSeq" id="YP_098288.1">
    <property type="nucleotide sequence ID" value="NC_006347.1"/>
</dbReference>
<dbReference type="SMR" id="Q64XM2"/>
<dbReference type="STRING" id="295405.BF1004"/>
<dbReference type="GeneID" id="60368385"/>
<dbReference type="KEGG" id="bfr:BF1004"/>
<dbReference type="PATRIC" id="fig|295405.11.peg.1003"/>
<dbReference type="HOGENOM" id="CLU_115305_2_0_10"/>
<dbReference type="OrthoDB" id="9803983at2"/>
<dbReference type="UniPathway" id="UPA00028">
    <property type="reaction ID" value="UER00002"/>
</dbReference>
<dbReference type="Proteomes" id="UP000002197">
    <property type="component" value="Chromosome"/>
</dbReference>
<dbReference type="GO" id="GO:0005829">
    <property type="term" value="C:cytosol"/>
    <property type="evidence" value="ECO:0007669"/>
    <property type="project" value="TreeGrafter"/>
</dbReference>
<dbReference type="GO" id="GO:0004068">
    <property type="term" value="F:aspartate 1-decarboxylase activity"/>
    <property type="evidence" value="ECO:0007669"/>
    <property type="project" value="UniProtKB-UniRule"/>
</dbReference>
<dbReference type="GO" id="GO:0006523">
    <property type="term" value="P:alanine biosynthetic process"/>
    <property type="evidence" value="ECO:0007669"/>
    <property type="project" value="InterPro"/>
</dbReference>
<dbReference type="GO" id="GO:0015940">
    <property type="term" value="P:pantothenate biosynthetic process"/>
    <property type="evidence" value="ECO:0007669"/>
    <property type="project" value="UniProtKB-UniRule"/>
</dbReference>
<dbReference type="CDD" id="cd06919">
    <property type="entry name" value="Asp_decarbox"/>
    <property type="match status" value="1"/>
</dbReference>
<dbReference type="Gene3D" id="2.40.40.20">
    <property type="match status" value="1"/>
</dbReference>
<dbReference type="HAMAP" id="MF_00446">
    <property type="entry name" value="PanD"/>
    <property type="match status" value="1"/>
</dbReference>
<dbReference type="InterPro" id="IPR009010">
    <property type="entry name" value="Asp_de-COase-like_dom_sf"/>
</dbReference>
<dbReference type="InterPro" id="IPR003190">
    <property type="entry name" value="Asp_decarbox"/>
</dbReference>
<dbReference type="NCBIfam" id="TIGR00223">
    <property type="entry name" value="panD"/>
    <property type="match status" value="1"/>
</dbReference>
<dbReference type="PANTHER" id="PTHR21012">
    <property type="entry name" value="ASPARTATE 1-DECARBOXYLASE"/>
    <property type="match status" value="1"/>
</dbReference>
<dbReference type="PANTHER" id="PTHR21012:SF0">
    <property type="entry name" value="ASPARTATE 1-DECARBOXYLASE"/>
    <property type="match status" value="1"/>
</dbReference>
<dbReference type="Pfam" id="PF02261">
    <property type="entry name" value="Asp_decarbox"/>
    <property type="match status" value="1"/>
</dbReference>
<dbReference type="PIRSF" id="PIRSF006246">
    <property type="entry name" value="Asp_decarbox"/>
    <property type="match status" value="1"/>
</dbReference>
<dbReference type="SUPFAM" id="SSF50692">
    <property type="entry name" value="ADC-like"/>
    <property type="match status" value="1"/>
</dbReference>
<evidence type="ECO:0000255" key="1">
    <source>
        <dbReference type="HAMAP-Rule" id="MF_00446"/>
    </source>
</evidence>
<comment type="function">
    <text evidence="1">Catalyzes the pyruvoyl-dependent decarboxylation of aspartate to produce beta-alanine.</text>
</comment>
<comment type="catalytic activity">
    <reaction evidence="1">
        <text>L-aspartate + H(+) = beta-alanine + CO2</text>
        <dbReference type="Rhea" id="RHEA:19497"/>
        <dbReference type="ChEBI" id="CHEBI:15378"/>
        <dbReference type="ChEBI" id="CHEBI:16526"/>
        <dbReference type="ChEBI" id="CHEBI:29991"/>
        <dbReference type="ChEBI" id="CHEBI:57966"/>
        <dbReference type="EC" id="4.1.1.11"/>
    </reaction>
</comment>
<comment type="cofactor">
    <cofactor evidence="1">
        <name>pyruvate</name>
        <dbReference type="ChEBI" id="CHEBI:15361"/>
    </cofactor>
    <text evidence="1">Binds 1 pyruvoyl group covalently per subunit.</text>
</comment>
<comment type="pathway">
    <text evidence="1">Cofactor biosynthesis; (R)-pantothenate biosynthesis; beta-alanine from L-aspartate: step 1/1.</text>
</comment>
<comment type="subunit">
    <text evidence="1">Heterooctamer of four alpha and four beta subunits.</text>
</comment>
<comment type="subcellular location">
    <subcellularLocation>
        <location evidence="1">Cytoplasm</location>
    </subcellularLocation>
</comment>
<comment type="PTM">
    <text evidence="1">Is synthesized initially as an inactive proenzyme, which is activated by self-cleavage at a specific serine bond to produce a beta-subunit with a hydroxyl group at its C-terminus and an alpha-subunit with a pyruvoyl group at its N-terminus.</text>
</comment>
<comment type="similarity">
    <text evidence="1">Belongs to the PanD family.</text>
</comment>
<organism>
    <name type="scientific">Bacteroides fragilis (strain YCH46)</name>
    <dbReference type="NCBI Taxonomy" id="295405"/>
    <lineage>
        <taxon>Bacteria</taxon>
        <taxon>Pseudomonadati</taxon>
        <taxon>Bacteroidota</taxon>
        <taxon>Bacteroidia</taxon>
        <taxon>Bacteroidales</taxon>
        <taxon>Bacteroidaceae</taxon>
        <taxon>Bacteroides</taxon>
    </lineage>
</organism>
<proteinExistence type="inferred from homology"/>
<name>PAND_BACFR</name>
<sequence>MMIEVLKSKIHCARVTEANLNYMGSITIDENLLDAANMIAGEKVYIADNNNGERFETYIIKGERGSGKICLNGAAARKVQPDDIVIIMSYALMDFEEAKSFKPTVIFPDPATNSVVK</sequence>
<protein>
    <recommendedName>
        <fullName evidence="1">Aspartate 1-decarboxylase</fullName>
        <ecNumber evidence="1">4.1.1.11</ecNumber>
    </recommendedName>
    <alternativeName>
        <fullName evidence="1">Aspartate alpha-decarboxylase</fullName>
    </alternativeName>
    <component>
        <recommendedName>
            <fullName evidence="1">Aspartate 1-decarboxylase beta chain</fullName>
        </recommendedName>
    </component>
    <component>
        <recommendedName>
            <fullName evidence="1">Aspartate 1-decarboxylase alpha chain</fullName>
        </recommendedName>
    </component>
</protein>
<reference key="1">
    <citation type="journal article" date="2004" name="Proc. Natl. Acad. Sci. U.S.A.">
        <title>Genomic analysis of Bacteroides fragilis reveals extensive DNA inversions regulating cell surface adaptation.</title>
        <authorList>
            <person name="Kuwahara T."/>
            <person name="Yamashita A."/>
            <person name="Hirakawa H."/>
            <person name="Nakayama H."/>
            <person name="Toh H."/>
            <person name="Okada N."/>
            <person name="Kuhara S."/>
            <person name="Hattori M."/>
            <person name="Hayashi T."/>
            <person name="Ohnishi Y."/>
        </authorList>
    </citation>
    <scope>NUCLEOTIDE SEQUENCE [LARGE SCALE GENOMIC DNA]</scope>
    <source>
        <strain>YCH46</strain>
    </source>
</reference>
<accession>Q64XM2</accession>
<keyword id="KW-0068">Autocatalytic cleavage</keyword>
<keyword id="KW-0963">Cytoplasm</keyword>
<keyword id="KW-0210">Decarboxylase</keyword>
<keyword id="KW-0456">Lyase</keyword>
<keyword id="KW-0566">Pantothenate biosynthesis</keyword>
<keyword id="KW-0670">Pyruvate</keyword>
<keyword id="KW-0704">Schiff base</keyword>
<keyword id="KW-0865">Zymogen</keyword>